<evidence type="ECO:0000255" key="1">
    <source>
        <dbReference type="HAMAP-Rule" id="MF_01224"/>
    </source>
</evidence>
<name>MOAC_LIMF3</name>
<protein>
    <recommendedName>
        <fullName evidence="1">Cyclic pyranopterin monophosphate synthase</fullName>
        <ecNumber evidence="1">4.6.1.17</ecNumber>
    </recommendedName>
    <alternativeName>
        <fullName evidence="1">Molybdenum cofactor biosynthesis protein C</fullName>
    </alternativeName>
</protein>
<gene>
    <name evidence="1" type="primary">moaC</name>
    <name type="ordered locus">LAF_1066</name>
</gene>
<sequence length="165" mass="17725">MSDPLTHFNDQNRAKMVDVTAKQVTARTATATGTIRMQPATLDRIHAGTMKKGDVLAVAQVAGIMAAKQTSNLIPMCHLIPLTGVDIHFTDNNQDTITATATVKTKHVTGVEIEALLAVQTTLLTIYDMCKAIDRGMVIDNVHLVEKDGGKSGHFQFGEAPESQA</sequence>
<feature type="chain" id="PRO_1000139278" description="Cyclic pyranopterin monophosphate synthase">
    <location>
        <begin position="1"/>
        <end position="165"/>
    </location>
</feature>
<feature type="active site" evidence="1">
    <location>
        <position position="128"/>
    </location>
</feature>
<feature type="binding site" evidence="1">
    <location>
        <begin position="76"/>
        <end position="78"/>
    </location>
    <ligand>
        <name>substrate</name>
    </ligand>
</feature>
<feature type="binding site" evidence="1">
    <location>
        <begin position="113"/>
        <end position="114"/>
    </location>
    <ligand>
        <name>substrate</name>
    </ligand>
</feature>
<keyword id="KW-0456">Lyase</keyword>
<keyword id="KW-0501">Molybdenum cofactor biosynthesis</keyword>
<keyword id="KW-1185">Reference proteome</keyword>
<accession>B2GCM0</accession>
<dbReference type="EC" id="4.6.1.17" evidence="1"/>
<dbReference type="EMBL" id="AP008937">
    <property type="protein sequence ID" value="BAG27402.1"/>
    <property type="molecule type" value="Genomic_DNA"/>
</dbReference>
<dbReference type="RefSeq" id="WP_012391331.1">
    <property type="nucleotide sequence ID" value="NC_010610.1"/>
</dbReference>
<dbReference type="SMR" id="B2GCM0"/>
<dbReference type="KEGG" id="lfe:LAF_1066"/>
<dbReference type="PATRIC" id="fig|334390.5.peg.1182"/>
<dbReference type="eggNOG" id="COG0315">
    <property type="taxonomic scope" value="Bacteria"/>
</dbReference>
<dbReference type="HOGENOM" id="CLU_074693_1_1_9"/>
<dbReference type="UniPathway" id="UPA00344"/>
<dbReference type="Proteomes" id="UP000001697">
    <property type="component" value="Chromosome"/>
</dbReference>
<dbReference type="GO" id="GO:0061799">
    <property type="term" value="F:cyclic pyranopterin monophosphate synthase activity"/>
    <property type="evidence" value="ECO:0007669"/>
    <property type="project" value="UniProtKB-UniRule"/>
</dbReference>
<dbReference type="GO" id="GO:0006777">
    <property type="term" value="P:Mo-molybdopterin cofactor biosynthetic process"/>
    <property type="evidence" value="ECO:0007669"/>
    <property type="project" value="UniProtKB-UniRule"/>
</dbReference>
<dbReference type="CDD" id="cd01420">
    <property type="entry name" value="MoaC_PE"/>
    <property type="match status" value="1"/>
</dbReference>
<dbReference type="Gene3D" id="3.30.70.640">
    <property type="entry name" value="Molybdopterin cofactor biosynthesis C (MoaC) domain"/>
    <property type="match status" value="1"/>
</dbReference>
<dbReference type="HAMAP" id="MF_01224_B">
    <property type="entry name" value="MoaC_B"/>
    <property type="match status" value="1"/>
</dbReference>
<dbReference type="InterPro" id="IPR023045">
    <property type="entry name" value="MoaC"/>
</dbReference>
<dbReference type="InterPro" id="IPR047594">
    <property type="entry name" value="MoaC_bact/euk"/>
</dbReference>
<dbReference type="InterPro" id="IPR036522">
    <property type="entry name" value="MoaC_sf"/>
</dbReference>
<dbReference type="InterPro" id="IPR050105">
    <property type="entry name" value="MoCo_biosynth_MoaA/MoaC"/>
</dbReference>
<dbReference type="InterPro" id="IPR002820">
    <property type="entry name" value="Mopterin_CF_biosynth-C_dom"/>
</dbReference>
<dbReference type="NCBIfam" id="TIGR00581">
    <property type="entry name" value="moaC"/>
    <property type="match status" value="1"/>
</dbReference>
<dbReference type="NCBIfam" id="NF006870">
    <property type="entry name" value="PRK09364.1"/>
    <property type="match status" value="1"/>
</dbReference>
<dbReference type="PANTHER" id="PTHR22960:SF29">
    <property type="entry name" value="CYCLIC PYRANOPTERIN MONOPHOSPHATE SYNTHASE"/>
    <property type="match status" value="1"/>
</dbReference>
<dbReference type="PANTHER" id="PTHR22960">
    <property type="entry name" value="MOLYBDOPTERIN COFACTOR SYNTHESIS PROTEIN A"/>
    <property type="match status" value="1"/>
</dbReference>
<dbReference type="Pfam" id="PF01967">
    <property type="entry name" value="MoaC"/>
    <property type="match status" value="1"/>
</dbReference>
<dbReference type="SUPFAM" id="SSF55040">
    <property type="entry name" value="Molybdenum cofactor biosynthesis protein C, MoaC"/>
    <property type="match status" value="1"/>
</dbReference>
<proteinExistence type="inferred from homology"/>
<comment type="function">
    <text evidence="1">Catalyzes the conversion of (8S)-3',8-cyclo-7,8-dihydroguanosine 5'-triphosphate to cyclic pyranopterin monophosphate (cPMP).</text>
</comment>
<comment type="catalytic activity">
    <reaction evidence="1">
        <text>(8S)-3',8-cyclo-7,8-dihydroguanosine 5'-triphosphate = cyclic pyranopterin phosphate + diphosphate</text>
        <dbReference type="Rhea" id="RHEA:49580"/>
        <dbReference type="ChEBI" id="CHEBI:33019"/>
        <dbReference type="ChEBI" id="CHEBI:59648"/>
        <dbReference type="ChEBI" id="CHEBI:131766"/>
        <dbReference type="EC" id="4.6.1.17"/>
    </reaction>
</comment>
<comment type="pathway">
    <text evidence="1">Cofactor biosynthesis; molybdopterin biosynthesis.</text>
</comment>
<comment type="subunit">
    <text evidence="1">Homohexamer; trimer of dimers.</text>
</comment>
<comment type="similarity">
    <text evidence="1">Belongs to the MoaC family.</text>
</comment>
<reference key="1">
    <citation type="journal article" date="2008" name="DNA Res.">
        <title>Comparative genome analysis of Lactobacillus reuteri and Lactobacillus fermentum reveal a genomic island for reuterin and cobalamin production.</title>
        <authorList>
            <person name="Morita H."/>
            <person name="Toh H."/>
            <person name="Fukuda S."/>
            <person name="Horikawa H."/>
            <person name="Oshima K."/>
            <person name="Suzuki T."/>
            <person name="Murakami M."/>
            <person name="Hisamatsu S."/>
            <person name="Kato Y."/>
            <person name="Takizawa T."/>
            <person name="Fukuoka H."/>
            <person name="Yoshimura T."/>
            <person name="Itoh K."/>
            <person name="O'Sullivan D.J."/>
            <person name="McKay L.L."/>
            <person name="Ohno H."/>
            <person name="Kikuchi J."/>
            <person name="Masaoka T."/>
            <person name="Hattori M."/>
        </authorList>
    </citation>
    <scope>NUCLEOTIDE SEQUENCE [LARGE SCALE GENOMIC DNA]</scope>
    <source>
        <strain>NBRC 3956 / LMG 18251</strain>
    </source>
</reference>
<organism>
    <name type="scientific">Limosilactobacillus fermentum (strain NBRC 3956 / LMG 18251)</name>
    <name type="common">Lactobacillus fermentum</name>
    <dbReference type="NCBI Taxonomy" id="334390"/>
    <lineage>
        <taxon>Bacteria</taxon>
        <taxon>Bacillati</taxon>
        <taxon>Bacillota</taxon>
        <taxon>Bacilli</taxon>
        <taxon>Lactobacillales</taxon>
        <taxon>Lactobacillaceae</taxon>
        <taxon>Limosilactobacillus</taxon>
    </lineage>
</organism>